<reference key="1">
    <citation type="journal article" date="2000" name="Nucleic Acids Res.">
        <title>Complete genome sequence of the alkaliphilic bacterium Bacillus halodurans and genomic sequence comparison with Bacillus subtilis.</title>
        <authorList>
            <person name="Takami H."/>
            <person name="Nakasone K."/>
            <person name="Takaki Y."/>
            <person name="Maeno G."/>
            <person name="Sasaki R."/>
            <person name="Masui N."/>
            <person name="Fuji F."/>
            <person name="Hirama C."/>
            <person name="Nakamura Y."/>
            <person name="Ogasawara N."/>
            <person name="Kuhara S."/>
            <person name="Horikoshi K."/>
        </authorList>
    </citation>
    <scope>NUCLEOTIDE SEQUENCE [LARGE SCALE GENOMIC DNA]</scope>
    <source>
        <strain>ATCC BAA-125 / DSM 18197 / FERM 7344 / JCM 9153 / C-125</strain>
    </source>
</reference>
<feature type="chain" id="PRO_0000201245" description="Cardiolipin synthase">
    <location>
        <begin position="1"/>
        <end position="503"/>
    </location>
</feature>
<feature type="transmembrane region" description="Helical" evidence="1">
    <location>
        <begin position="5"/>
        <end position="25"/>
    </location>
</feature>
<feature type="transmembrane region" description="Helical" evidence="1">
    <location>
        <begin position="29"/>
        <end position="49"/>
    </location>
</feature>
<feature type="transmembrane region" description="Helical" evidence="1">
    <location>
        <begin position="59"/>
        <end position="79"/>
    </location>
</feature>
<feature type="domain" description="PLD phosphodiesterase 1" evidence="1">
    <location>
        <begin position="238"/>
        <end position="265"/>
    </location>
</feature>
<feature type="domain" description="PLD phosphodiesterase 2" evidence="1">
    <location>
        <begin position="416"/>
        <end position="443"/>
    </location>
</feature>
<feature type="active site" evidence="1">
    <location>
        <position position="243"/>
    </location>
</feature>
<feature type="active site" evidence="1">
    <location>
        <position position="245"/>
    </location>
</feature>
<feature type="active site" evidence="1">
    <location>
        <position position="250"/>
    </location>
</feature>
<feature type="active site" evidence="1">
    <location>
        <position position="421"/>
    </location>
</feature>
<feature type="active site" evidence="1">
    <location>
        <position position="423"/>
    </location>
</feature>
<feature type="active site" evidence="1">
    <location>
        <position position="428"/>
    </location>
</feature>
<organism>
    <name type="scientific">Halalkalibacterium halodurans (strain ATCC BAA-125 / DSM 18197 / FERM 7344 / JCM 9153 / C-125)</name>
    <name type="common">Bacillus halodurans</name>
    <dbReference type="NCBI Taxonomy" id="272558"/>
    <lineage>
        <taxon>Bacteria</taxon>
        <taxon>Bacillati</taxon>
        <taxon>Bacillota</taxon>
        <taxon>Bacilli</taxon>
        <taxon>Bacillales</taxon>
        <taxon>Bacillaceae</taxon>
        <taxon>Halalkalibacterium (ex Joshi et al. 2022)</taxon>
    </lineage>
</organism>
<gene>
    <name type="primary">cls</name>
    <name type="ordered locus">BH2858</name>
</gene>
<sequence>MKNRLNVLLFLLILSTGLYLTRSFWQGWIVGAFSVLITITVVFIGIVIFLENRHPTKTLTWLMVLAVFPVVGFIFYLMFGQNHRKSKTFMKKALSDEEAFEKIEGNRQLNEEQLQKMGGHQQLLFRLAHRLANNPISFSTNTKVLTDGKETFAHIKQALRMATHHIHLEYYIVRDDEIGQEIKEILMQKAKEGIHVRFLYDGVGSWKLSKSYIQDLKQAGVEIVPFAPVKLPFINHTINYRNHRKIIVIDGTVGFVGGLNIGDEYLGKDPYFGFWRDTHLYVRGEAVRTLQLIFLRDWAHETGETILKPSYLSPALTNMKDDGGVQMIASGPDTRWEINKKLFFSMITSAKKSIWITSPYFIPDEDILSALKIAALSGIDVRILVPNRPDKRIVFHASRSYFPELLEAGVKVYEYTRGFLHSKIIIVDNEIASIGTSNMDMRSFHLNFEVNAFLYRTKSVTTLVSDFVYDLEHTNQIRFEQFRNRAWYYRVLESTCRLLSPLL</sequence>
<accession>Q9K8Z4</accession>
<proteinExistence type="inferred from homology"/>
<protein>
    <recommendedName>
        <fullName evidence="1">Cardiolipin synthase</fullName>
        <shortName evidence="1">CL synthase</shortName>
        <ecNumber evidence="1">2.7.8.-</ecNumber>
    </recommendedName>
</protein>
<evidence type="ECO:0000255" key="1">
    <source>
        <dbReference type="HAMAP-Rule" id="MF_01916"/>
    </source>
</evidence>
<keyword id="KW-1003">Cell membrane</keyword>
<keyword id="KW-0444">Lipid biosynthesis</keyword>
<keyword id="KW-0443">Lipid metabolism</keyword>
<keyword id="KW-0472">Membrane</keyword>
<keyword id="KW-0594">Phospholipid biosynthesis</keyword>
<keyword id="KW-1208">Phospholipid metabolism</keyword>
<keyword id="KW-1185">Reference proteome</keyword>
<keyword id="KW-0677">Repeat</keyword>
<keyword id="KW-0808">Transferase</keyword>
<keyword id="KW-0812">Transmembrane</keyword>
<keyword id="KW-1133">Transmembrane helix</keyword>
<comment type="function">
    <text evidence="1">Catalyzes the reversible phosphatidyl group transfer from one phosphatidylglycerol molecule to another to form cardiolipin (CL) (diphosphatidylglycerol) and glycerol.</text>
</comment>
<comment type="catalytic activity">
    <reaction evidence="1">
        <text>2 a 1,2-diacyl-sn-glycero-3-phospho-(1'-sn-glycerol) = a cardiolipin + glycerol</text>
        <dbReference type="Rhea" id="RHEA:31451"/>
        <dbReference type="ChEBI" id="CHEBI:17754"/>
        <dbReference type="ChEBI" id="CHEBI:62237"/>
        <dbReference type="ChEBI" id="CHEBI:64716"/>
    </reaction>
</comment>
<comment type="subcellular location">
    <subcellularLocation>
        <location evidence="1">Cell membrane</location>
        <topology evidence="1">Multi-pass membrane protein</topology>
    </subcellularLocation>
</comment>
<comment type="similarity">
    <text evidence="1">Belongs to the phospholipase D family. Cardiolipin synthase subfamily.</text>
</comment>
<name>CLS_HALH5</name>
<dbReference type="EC" id="2.7.8.-" evidence="1"/>
<dbReference type="EMBL" id="BA000004">
    <property type="protein sequence ID" value="BAB06577.1"/>
    <property type="molecule type" value="Genomic_DNA"/>
</dbReference>
<dbReference type="PIR" id="B84007">
    <property type="entry name" value="B84007"/>
</dbReference>
<dbReference type="RefSeq" id="WP_010899005.1">
    <property type="nucleotide sequence ID" value="NC_002570.2"/>
</dbReference>
<dbReference type="SMR" id="Q9K8Z4"/>
<dbReference type="STRING" id="272558.gene:10728768"/>
<dbReference type="GeneID" id="87598385"/>
<dbReference type="KEGG" id="bha:BH2858"/>
<dbReference type="eggNOG" id="COG1502">
    <property type="taxonomic scope" value="Bacteria"/>
</dbReference>
<dbReference type="HOGENOM" id="CLU_038053_1_2_9"/>
<dbReference type="OrthoDB" id="9762009at2"/>
<dbReference type="Proteomes" id="UP000001258">
    <property type="component" value="Chromosome"/>
</dbReference>
<dbReference type="GO" id="GO:0005886">
    <property type="term" value="C:plasma membrane"/>
    <property type="evidence" value="ECO:0007669"/>
    <property type="project" value="UniProtKB-SubCell"/>
</dbReference>
<dbReference type="GO" id="GO:0008808">
    <property type="term" value="F:cardiolipin synthase activity"/>
    <property type="evidence" value="ECO:0007669"/>
    <property type="project" value="InterPro"/>
</dbReference>
<dbReference type="GO" id="GO:0032049">
    <property type="term" value="P:cardiolipin biosynthetic process"/>
    <property type="evidence" value="ECO:0007669"/>
    <property type="project" value="InterPro"/>
</dbReference>
<dbReference type="CDD" id="cd09110">
    <property type="entry name" value="PLDc_CLS_1"/>
    <property type="match status" value="1"/>
</dbReference>
<dbReference type="CDD" id="cd09112">
    <property type="entry name" value="PLDc_CLS_2"/>
    <property type="match status" value="1"/>
</dbReference>
<dbReference type="FunFam" id="3.30.870.10:FF:000014">
    <property type="entry name" value="Cardiolipin synthase"/>
    <property type="match status" value="1"/>
</dbReference>
<dbReference type="FunFam" id="3.30.870.10:FF:000021">
    <property type="entry name" value="Cardiolipin synthase"/>
    <property type="match status" value="1"/>
</dbReference>
<dbReference type="Gene3D" id="3.30.870.10">
    <property type="entry name" value="Endonuclease Chain A"/>
    <property type="match status" value="2"/>
</dbReference>
<dbReference type="HAMAP" id="MF_01916">
    <property type="entry name" value="Cardiolipin_synth_Cls"/>
    <property type="match status" value="1"/>
</dbReference>
<dbReference type="InterPro" id="IPR030874">
    <property type="entry name" value="Cardiolipin_synth_Firmi"/>
</dbReference>
<dbReference type="InterPro" id="IPR022924">
    <property type="entry name" value="Cardiolipin_synthase"/>
</dbReference>
<dbReference type="InterPro" id="IPR027379">
    <property type="entry name" value="CLS_N"/>
</dbReference>
<dbReference type="InterPro" id="IPR025202">
    <property type="entry name" value="PLD-like_dom"/>
</dbReference>
<dbReference type="InterPro" id="IPR001736">
    <property type="entry name" value="PLipase_D/transphosphatidylase"/>
</dbReference>
<dbReference type="NCBIfam" id="TIGR04265">
    <property type="entry name" value="bac_cardiolipin"/>
    <property type="match status" value="1"/>
</dbReference>
<dbReference type="PANTHER" id="PTHR21248">
    <property type="entry name" value="CARDIOLIPIN SYNTHASE"/>
    <property type="match status" value="1"/>
</dbReference>
<dbReference type="PANTHER" id="PTHR21248:SF20">
    <property type="entry name" value="CARDIOLIPIN SYNTHASE YWIE-RELATED"/>
    <property type="match status" value="1"/>
</dbReference>
<dbReference type="Pfam" id="PF13091">
    <property type="entry name" value="PLDc_2"/>
    <property type="match status" value="2"/>
</dbReference>
<dbReference type="Pfam" id="PF13396">
    <property type="entry name" value="PLDc_N"/>
    <property type="match status" value="1"/>
</dbReference>
<dbReference type="SMART" id="SM00155">
    <property type="entry name" value="PLDc"/>
    <property type="match status" value="2"/>
</dbReference>
<dbReference type="SUPFAM" id="SSF56024">
    <property type="entry name" value="Phospholipase D/nuclease"/>
    <property type="match status" value="2"/>
</dbReference>
<dbReference type="PROSITE" id="PS50035">
    <property type="entry name" value="PLD"/>
    <property type="match status" value="2"/>
</dbReference>